<dbReference type="EC" id="7.5.2.7" evidence="1"/>
<dbReference type="EMBL" id="BX950851">
    <property type="protein sequence ID" value="CAG72935.1"/>
    <property type="molecule type" value="Genomic_DNA"/>
</dbReference>
<dbReference type="RefSeq" id="WP_011091660.1">
    <property type="nucleotide sequence ID" value="NC_004547.2"/>
</dbReference>
<dbReference type="SMR" id="Q6DB87"/>
<dbReference type="STRING" id="218491.ECA0011"/>
<dbReference type="DNASU" id="2884518"/>
<dbReference type="KEGG" id="eca:ECA0011"/>
<dbReference type="PATRIC" id="fig|218491.5.peg.11"/>
<dbReference type="eggNOG" id="COG1129">
    <property type="taxonomic scope" value="Bacteria"/>
</dbReference>
<dbReference type="HOGENOM" id="CLU_000604_92_3_6"/>
<dbReference type="OrthoDB" id="9776369at2"/>
<dbReference type="Proteomes" id="UP000007966">
    <property type="component" value="Chromosome"/>
</dbReference>
<dbReference type="GO" id="GO:0005886">
    <property type="term" value="C:plasma membrane"/>
    <property type="evidence" value="ECO:0007669"/>
    <property type="project" value="UniProtKB-SubCell"/>
</dbReference>
<dbReference type="GO" id="GO:0015611">
    <property type="term" value="F:ABC-type D-ribose transporter activity"/>
    <property type="evidence" value="ECO:0007669"/>
    <property type="project" value="UniProtKB-EC"/>
</dbReference>
<dbReference type="GO" id="GO:0005524">
    <property type="term" value="F:ATP binding"/>
    <property type="evidence" value="ECO:0007669"/>
    <property type="project" value="UniProtKB-KW"/>
</dbReference>
<dbReference type="GO" id="GO:0016887">
    <property type="term" value="F:ATP hydrolysis activity"/>
    <property type="evidence" value="ECO:0007669"/>
    <property type="project" value="InterPro"/>
</dbReference>
<dbReference type="CDD" id="cd03216">
    <property type="entry name" value="ABC_Carb_Monos_I"/>
    <property type="match status" value="1"/>
</dbReference>
<dbReference type="CDD" id="cd03215">
    <property type="entry name" value="ABC_Carb_Monos_II"/>
    <property type="match status" value="1"/>
</dbReference>
<dbReference type="FunFam" id="3.40.50.300:FF:000126">
    <property type="entry name" value="Galactose/methyl galactoside import ATP-binding protein MglA"/>
    <property type="match status" value="1"/>
</dbReference>
<dbReference type="FunFam" id="3.40.50.300:FF:000127">
    <property type="entry name" value="Ribose import ATP-binding protein RbsA"/>
    <property type="match status" value="1"/>
</dbReference>
<dbReference type="Gene3D" id="3.40.50.300">
    <property type="entry name" value="P-loop containing nucleotide triphosphate hydrolases"/>
    <property type="match status" value="2"/>
</dbReference>
<dbReference type="InterPro" id="IPR003593">
    <property type="entry name" value="AAA+_ATPase"/>
</dbReference>
<dbReference type="InterPro" id="IPR050107">
    <property type="entry name" value="ABC_carbohydrate_import_ATPase"/>
</dbReference>
<dbReference type="InterPro" id="IPR003439">
    <property type="entry name" value="ABC_transporter-like_ATP-bd"/>
</dbReference>
<dbReference type="InterPro" id="IPR017871">
    <property type="entry name" value="ABC_transporter-like_CS"/>
</dbReference>
<dbReference type="InterPro" id="IPR027417">
    <property type="entry name" value="P-loop_NTPase"/>
</dbReference>
<dbReference type="NCBIfam" id="NF008030">
    <property type="entry name" value="PRK10762.1"/>
    <property type="match status" value="1"/>
</dbReference>
<dbReference type="PANTHER" id="PTHR43790">
    <property type="entry name" value="CARBOHYDRATE TRANSPORT ATP-BINDING PROTEIN MG119-RELATED"/>
    <property type="match status" value="1"/>
</dbReference>
<dbReference type="PANTHER" id="PTHR43790:SF3">
    <property type="entry name" value="D-ALLOSE IMPORT ATP-BINDING PROTEIN ALSA-RELATED"/>
    <property type="match status" value="1"/>
</dbReference>
<dbReference type="Pfam" id="PF00005">
    <property type="entry name" value="ABC_tran"/>
    <property type="match status" value="2"/>
</dbReference>
<dbReference type="SMART" id="SM00382">
    <property type="entry name" value="AAA"/>
    <property type="match status" value="2"/>
</dbReference>
<dbReference type="SUPFAM" id="SSF52540">
    <property type="entry name" value="P-loop containing nucleoside triphosphate hydrolases"/>
    <property type="match status" value="2"/>
</dbReference>
<dbReference type="PROSITE" id="PS00211">
    <property type="entry name" value="ABC_TRANSPORTER_1"/>
    <property type="match status" value="1"/>
</dbReference>
<dbReference type="PROSITE" id="PS50893">
    <property type="entry name" value="ABC_TRANSPORTER_2"/>
    <property type="match status" value="1"/>
</dbReference>
<dbReference type="PROSITE" id="PS51254">
    <property type="entry name" value="RBSA"/>
    <property type="match status" value="1"/>
</dbReference>
<gene>
    <name evidence="1" type="primary">rbsA</name>
    <name type="ordered locus">ECA0011</name>
</gene>
<sequence>MQPLLQLQGITKSFPGVKALSGAALNVYPGKVMALVGENGAGKSTMMKVLTGIYRKDAGSIHFLGQEVDFNGPKASQEAGIGIIHQELNLIPQLTIAENIFLGREFTNRFGRIDWNKMYAEADKLLKRLNLRYDSRRMVGDLSIGDQQMVEIAKVLSFESKVIIMDEPTDALTDTETASLFSVINELQSQGCGIVYISHRLKEIFEICDDITVFRDGQFIGERPVSDLEEDTLIEMMVGRKLEDQYPRSNKAPGEVRLKVQNLSGPGVDSVSFTVRKGEILGVAGLMGAGRTELMKILYGALPRTGGNVTLDGRDVVTRKPQDGLANGIVYISEDRKRDGLVLGMSVKENMSLTALRYFSHAGGRLKHAEEQLTVADFIRLFNVKTPSMEQPIGLLSGGNQQKVAIARGLMTRPNVLILDEPTRGVDVGAKKEIYQLINQFKEEGLSIILVSSEMPEVLGMSDRIIVMHEGRLSGDFPIEQATQEALMAAAVGKQYGAKQE</sequence>
<reference key="1">
    <citation type="journal article" date="2004" name="Proc. Natl. Acad. Sci. U.S.A.">
        <title>Genome sequence of the enterobacterial phytopathogen Erwinia carotovora subsp. atroseptica and characterization of virulence factors.</title>
        <authorList>
            <person name="Bell K.S."/>
            <person name="Sebaihia M."/>
            <person name="Pritchard L."/>
            <person name="Holden M.T.G."/>
            <person name="Hyman L.J."/>
            <person name="Holeva M.C."/>
            <person name="Thomson N.R."/>
            <person name="Bentley S.D."/>
            <person name="Churcher L.J.C."/>
            <person name="Mungall K."/>
            <person name="Atkin R."/>
            <person name="Bason N."/>
            <person name="Brooks K."/>
            <person name="Chillingworth T."/>
            <person name="Clark K."/>
            <person name="Doggett J."/>
            <person name="Fraser A."/>
            <person name="Hance Z."/>
            <person name="Hauser H."/>
            <person name="Jagels K."/>
            <person name="Moule S."/>
            <person name="Norbertczak H."/>
            <person name="Ormond D."/>
            <person name="Price C."/>
            <person name="Quail M.A."/>
            <person name="Sanders M."/>
            <person name="Walker D."/>
            <person name="Whitehead S."/>
            <person name="Salmond G.P.C."/>
            <person name="Birch P.R.J."/>
            <person name="Parkhill J."/>
            <person name="Toth I.K."/>
        </authorList>
    </citation>
    <scope>NUCLEOTIDE SEQUENCE [LARGE SCALE GENOMIC DNA]</scope>
    <source>
        <strain>SCRI 1043 / ATCC BAA-672</strain>
    </source>
</reference>
<comment type="function">
    <text evidence="1">Part of the ABC transporter complex RbsABC involved in ribose import. Responsible for energy coupling to the transport system.</text>
</comment>
<comment type="catalytic activity">
    <reaction evidence="1">
        <text>D-ribose(out) + ATP + H2O = D-ribose(in) + ADP + phosphate + H(+)</text>
        <dbReference type="Rhea" id="RHEA:29903"/>
        <dbReference type="ChEBI" id="CHEBI:15377"/>
        <dbReference type="ChEBI" id="CHEBI:15378"/>
        <dbReference type="ChEBI" id="CHEBI:30616"/>
        <dbReference type="ChEBI" id="CHEBI:43474"/>
        <dbReference type="ChEBI" id="CHEBI:47013"/>
        <dbReference type="ChEBI" id="CHEBI:456216"/>
        <dbReference type="EC" id="7.5.2.7"/>
    </reaction>
</comment>
<comment type="subunit">
    <text evidence="1">The complex is composed of an ATP-binding protein (RbsA), two transmembrane proteins (RbsC) and a solute-binding protein (RbsB).</text>
</comment>
<comment type="subcellular location">
    <subcellularLocation>
        <location evidence="1">Cell inner membrane</location>
        <topology evidence="1">Peripheral membrane protein</topology>
    </subcellularLocation>
</comment>
<comment type="similarity">
    <text evidence="1">Belongs to the ABC transporter superfamily. Ribose importer (TC 3.A.1.2.1) family.</text>
</comment>
<name>RBSA_PECAS</name>
<keyword id="KW-0067">ATP-binding</keyword>
<keyword id="KW-0997">Cell inner membrane</keyword>
<keyword id="KW-1003">Cell membrane</keyword>
<keyword id="KW-0472">Membrane</keyword>
<keyword id="KW-0547">Nucleotide-binding</keyword>
<keyword id="KW-1185">Reference proteome</keyword>
<keyword id="KW-0677">Repeat</keyword>
<keyword id="KW-0762">Sugar transport</keyword>
<keyword id="KW-1278">Translocase</keyword>
<keyword id="KW-0813">Transport</keyword>
<evidence type="ECO:0000255" key="1">
    <source>
        <dbReference type="HAMAP-Rule" id="MF_01716"/>
    </source>
</evidence>
<organism>
    <name type="scientific">Pectobacterium atrosepticum (strain SCRI 1043 / ATCC BAA-672)</name>
    <name type="common">Erwinia carotovora subsp. atroseptica</name>
    <dbReference type="NCBI Taxonomy" id="218491"/>
    <lineage>
        <taxon>Bacteria</taxon>
        <taxon>Pseudomonadati</taxon>
        <taxon>Pseudomonadota</taxon>
        <taxon>Gammaproteobacteria</taxon>
        <taxon>Enterobacterales</taxon>
        <taxon>Pectobacteriaceae</taxon>
        <taxon>Pectobacterium</taxon>
    </lineage>
</organism>
<protein>
    <recommendedName>
        <fullName evidence="1">Ribose import ATP-binding protein RbsA</fullName>
        <ecNumber evidence="1">7.5.2.7</ecNumber>
    </recommendedName>
</protein>
<proteinExistence type="inferred from homology"/>
<feature type="chain" id="PRO_0000261062" description="Ribose import ATP-binding protein RbsA">
    <location>
        <begin position="1"/>
        <end position="501"/>
    </location>
</feature>
<feature type="domain" description="ABC transporter 1" evidence="1">
    <location>
        <begin position="5"/>
        <end position="241"/>
    </location>
</feature>
<feature type="domain" description="ABC transporter 2" evidence="1">
    <location>
        <begin position="252"/>
        <end position="495"/>
    </location>
</feature>
<feature type="binding site" evidence="1">
    <location>
        <begin position="37"/>
        <end position="44"/>
    </location>
    <ligand>
        <name>ATP</name>
        <dbReference type="ChEBI" id="CHEBI:30616"/>
    </ligand>
</feature>
<accession>Q6DB87</accession>